<feature type="chain" id="PRO_0000369011" description="ATP synthase subunit b 2">
    <location>
        <begin position="1"/>
        <end position="201"/>
    </location>
</feature>
<feature type="transmembrane region" description="Helical" evidence="2">
    <location>
        <begin position="47"/>
        <end position="66"/>
    </location>
</feature>
<feature type="region of interest" description="Disordered" evidence="3">
    <location>
        <begin position="1"/>
        <end position="39"/>
    </location>
</feature>
<feature type="compositionally biased region" description="Polar residues" evidence="3">
    <location>
        <begin position="1"/>
        <end position="17"/>
    </location>
</feature>
<comment type="function">
    <text evidence="1">F(1)F(0) ATP synthase produces ATP from ADP in the presence of a proton or sodium gradient. F-type ATPases consist of two structural domains, F(1) containing the extramembraneous catalytic core and F(0) containing the membrane proton channel, linked together by a central stalk and a peripheral stalk. During catalysis, ATP synthesis in the catalytic domain of F(1) is coupled via a rotary mechanism of the central stalk subunits to proton translocation (By similarity).</text>
</comment>
<comment type="function">
    <text evidence="1">Component of the F(0) channel, it forms part of the peripheral stalk, linking F(1) to F(0). The b'-subunit is a diverged and duplicated form of b found in plants and photosynthetic bacteria (By similarity).</text>
</comment>
<comment type="subunit">
    <text evidence="1">F-type ATPases have 2 components, F(1) - the catalytic core - and F(0) - the membrane proton channel. F(1) has five subunits: alpha(3), beta(3), gamma(1), delta(1), epsilon(1). F(0) has three main subunits: a(1), b(2) and c(10-14). The alpha and beta chains form an alternating ring which encloses part of the gamma chain. F(1) is attached to F(0) by a central stalk formed by the gamma and epsilon chains, while a peripheral stalk is formed by the delta and b chains (By similarity).</text>
</comment>
<comment type="subcellular location">
    <subcellularLocation>
        <location evidence="1">Cell inner membrane</location>
        <topology evidence="1">Single-pass membrane protein</topology>
    </subcellularLocation>
</comment>
<comment type="similarity">
    <text evidence="4">Belongs to the ATPase B chain family.</text>
</comment>
<accession>A9VYW8</accession>
<keyword id="KW-0066">ATP synthesis</keyword>
<keyword id="KW-0997">Cell inner membrane</keyword>
<keyword id="KW-1003">Cell membrane</keyword>
<keyword id="KW-0138">CF(0)</keyword>
<keyword id="KW-0375">Hydrogen ion transport</keyword>
<keyword id="KW-0406">Ion transport</keyword>
<keyword id="KW-0472">Membrane</keyword>
<keyword id="KW-0812">Transmembrane</keyword>
<keyword id="KW-1133">Transmembrane helix</keyword>
<keyword id="KW-0813">Transport</keyword>
<evidence type="ECO:0000250" key="1"/>
<evidence type="ECO:0000255" key="2"/>
<evidence type="ECO:0000256" key="3">
    <source>
        <dbReference type="SAM" id="MobiDB-lite"/>
    </source>
</evidence>
<evidence type="ECO:0000305" key="4"/>
<protein>
    <recommendedName>
        <fullName>ATP synthase subunit b 2</fullName>
    </recommendedName>
    <alternativeName>
        <fullName>ATP synthase F(0) sector subunit b 2</fullName>
    </alternativeName>
    <alternativeName>
        <fullName>ATPase subunit I 2</fullName>
    </alternativeName>
    <alternativeName>
        <fullName>F-type ATPase subunit b 2</fullName>
        <shortName>F-ATPase subunit b 2</shortName>
    </alternativeName>
</protein>
<reference key="1">
    <citation type="submission" date="2007-12" db="EMBL/GenBank/DDBJ databases">
        <title>Complete sequence of Methylobacterium extorquens PA1.</title>
        <authorList>
            <consortium name="US DOE Joint Genome Institute"/>
            <person name="Copeland A."/>
            <person name="Lucas S."/>
            <person name="Lapidus A."/>
            <person name="Barry K."/>
            <person name="Glavina del Rio T."/>
            <person name="Dalin E."/>
            <person name="Tice H."/>
            <person name="Pitluck S."/>
            <person name="Saunders E."/>
            <person name="Brettin T."/>
            <person name="Bruce D."/>
            <person name="Detter J.C."/>
            <person name="Han C."/>
            <person name="Schmutz J."/>
            <person name="Larimer F."/>
            <person name="Land M."/>
            <person name="Hauser L."/>
            <person name="Kyrpides N."/>
            <person name="Kim E."/>
            <person name="Marx C."/>
            <person name="Richardson P."/>
        </authorList>
    </citation>
    <scope>NUCLEOTIDE SEQUENCE [LARGE SCALE GENOMIC DNA]</scope>
    <source>
        <strain>PA1</strain>
    </source>
</reference>
<name>ATPF2_METEP</name>
<dbReference type="EMBL" id="CP000908">
    <property type="protein sequence ID" value="ABY31560.1"/>
    <property type="molecule type" value="Genomic_DNA"/>
</dbReference>
<dbReference type="RefSeq" id="WP_012254465.1">
    <property type="nucleotide sequence ID" value="NC_010172.1"/>
</dbReference>
<dbReference type="SMR" id="A9VYW8"/>
<dbReference type="KEGG" id="mex:Mext_3173"/>
<dbReference type="eggNOG" id="COG0711">
    <property type="taxonomic scope" value="Bacteria"/>
</dbReference>
<dbReference type="HOGENOM" id="CLU_079215_1_2_5"/>
<dbReference type="BioCyc" id="MEXT419610:MEXT_RS15950-MONOMER"/>
<dbReference type="GO" id="GO:0005886">
    <property type="term" value="C:plasma membrane"/>
    <property type="evidence" value="ECO:0007669"/>
    <property type="project" value="UniProtKB-SubCell"/>
</dbReference>
<dbReference type="GO" id="GO:0045259">
    <property type="term" value="C:proton-transporting ATP synthase complex"/>
    <property type="evidence" value="ECO:0007669"/>
    <property type="project" value="UniProtKB-KW"/>
</dbReference>
<dbReference type="GO" id="GO:0046933">
    <property type="term" value="F:proton-transporting ATP synthase activity, rotational mechanism"/>
    <property type="evidence" value="ECO:0007669"/>
    <property type="project" value="UniProtKB-UniRule"/>
</dbReference>
<dbReference type="GO" id="GO:0046961">
    <property type="term" value="F:proton-transporting ATPase activity, rotational mechanism"/>
    <property type="evidence" value="ECO:0007669"/>
    <property type="project" value="TreeGrafter"/>
</dbReference>
<dbReference type="CDD" id="cd06503">
    <property type="entry name" value="ATP-synt_Fo_b"/>
    <property type="match status" value="1"/>
</dbReference>
<dbReference type="HAMAP" id="MF_01398">
    <property type="entry name" value="ATP_synth_b_bprime"/>
    <property type="match status" value="1"/>
</dbReference>
<dbReference type="InterPro" id="IPR002146">
    <property type="entry name" value="ATP_synth_b/b'su_bac/chlpt"/>
</dbReference>
<dbReference type="InterPro" id="IPR050059">
    <property type="entry name" value="ATP_synthase_B_chain"/>
</dbReference>
<dbReference type="NCBIfam" id="NF006612">
    <property type="entry name" value="PRK09174.1"/>
    <property type="match status" value="1"/>
</dbReference>
<dbReference type="PANTHER" id="PTHR33445:SF1">
    <property type="entry name" value="ATP SYNTHASE SUBUNIT B"/>
    <property type="match status" value="1"/>
</dbReference>
<dbReference type="PANTHER" id="PTHR33445">
    <property type="entry name" value="ATP SYNTHASE SUBUNIT B', CHLOROPLASTIC"/>
    <property type="match status" value="1"/>
</dbReference>
<dbReference type="Pfam" id="PF00430">
    <property type="entry name" value="ATP-synt_B"/>
    <property type="match status" value="1"/>
</dbReference>
<proteinExistence type="inferred from homology"/>
<sequence length="201" mass="21343">MAEQKNPLTTPSPNADTTIVPAGSPHTHTEQPSGGHGGAFPPFESHTFLSQLIWLALAFGLLYYLMSKVALPRIEAILGNRAGRLSSDLTEAQRMKTEADAAGAAYEKSLREAQAKAQAIAQETRNSLSAEADAKRKTLEAELNQRLAASEATIRTRTTEAMGNVRAIAGETASAIVERLTGQAPDQASLNRALDATPAVH</sequence>
<gene>
    <name type="primary">atpF2</name>
    <name type="synonym">atpG</name>
    <name type="ordered locus">Mext_3173</name>
</gene>
<organism>
    <name type="scientific">Methylorubrum extorquens (strain PA1)</name>
    <name type="common">Methylobacterium extorquens</name>
    <dbReference type="NCBI Taxonomy" id="419610"/>
    <lineage>
        <taxon>Bacteria</taxon>
        <taxon>Pseudomonadati</taxon>
        <taxon>Pseudomonadota</taxon>
        <taxon>Alphaproteobacteria</taxon>
        <taxon>Hyphomicrobiales</taxon>
        <taxon>Methylobacteriaceae</taxon>
        <taxon>Methylorubrum</taxon>
    </lineage>
</organism>